<comment type="function">
    <text evidence="1 4">Molecular adapter that acts as a bridge between a variety of multiprotein complexes, and which is involved in embryonic development, immunity, myogenesis and brain development (PubMed:34711951). Plays a key role in nuclear protein degradation by promoting import of proteasomes into the nucleus: directly binds to fully assembled 20S proteasomes at one end and to nuclear import receptor IPO9 at the other end, bridging them together and mediating the import of pre-assembled proteasome complexes through the nuclear pore (PubMed:34711951). Involved in innate immunity by regulating the production of interleukin-6 (IL6) downstream of Toll-like receptor (TLR): acts by bridging the NF-kappa-B inhibitor NFKBIZ and the SWI/SNF complex, leading to promote induction of IL6 (By similarity). Also involved in adaptive immunity by promoting B-cell activation (By similarity). Involved in brain development: required for the survival and proliferation of cerebral cortical progenitor cells (By similarity). Involved in myogenesis: required for skeletal muscle formation and skeletal development, possibly by regulating expression of muscle differentiation factors (By similarity). Also plays a role in facilitating interdigital tissue regression during limb development (By similarity).</text>
</comment>
<comment type="subunit">
    <text evidence="1 2 4">Homodimer (PubMed:34711951). Interacts with IPO9; the interaction is direct (PubMed:34711951). Associates (via SYVS motif) with 20S and 26S proteasomes (PubMed:34711951). Interacts with SMARCD1; promoting SWI/SNF complex recruitment (By similarity). Interacts with NFKBIZ (By similarity). Interacts with YWHAB (By similarity).</text>
</comment>
<comment type="interaction">
    <interactant intactId="EBI-742928">
        <id>Q53H80</id>
    </interactant>
    <interactant intactId="EBI-742928">
        <id>Q53H80</id>
        <label>AKIRIN2</label>
    </interactant>
    <organismsDiffer>false</organismsDiffer>
    <experiments>3</experiments>
</comment>
<comment type="interaction">
    <interactant intactId="EBI-742928">
        <id>Q53H80</id>
    </interactant>
    <interactant intactId="EBI-352986">
        <id>P52597</id>
        <label>HNRNPF</label>
    </interactant>
    <organismsDiffer>false</organismsDiffer>
    <experiments>3</experiments>
</comment>
<comment type="interaction">
    <interactant intactId="EBI-742928">
        <id>Q53H80</id>
    </interactant>
    <interactant intactId="EBI-742664">
        <id>Q9BPX1</id>
        <label>HSD17B14</label>
    </interactant>
    <organismsDiffer>false</organismsDiffer>
    <experiments>3</experiments>
</comment>
<comment type="interaction">
    <interactant intactId="EBI-742928">
        <id>Q53H80</id>
    </interactant>
    <interactant intactId="EBI-6165891">
        <id>Q14696</id>
        <label>MESD</label>
    </interactant>
    <organismsDiffer>false</organismsDiffer>
    <experiments>3</experiments>
</comment>
<comment type="interaction">
    <interactant intactId="EBI-742928">
        <id>Q53H80</id>
    </interactant>
    <interactant intactId="EBI-5662487">
        <id>Q8TDC0</id>
        <label>MYOZ3</label>
    </interactant>
    <organismsDiffer>false</organismsDiffer>
    <experiments>3</experiments>
</comment>
<comment type="interaction">
    <interactant intactId="EBI-742928">
        <id>Q53H80</id>
    </interactant>
    <interactant intactId="EBI-741158">
        <id>Q96HA8</id>
        <label>NTAQ1</label>
    </interactant>
    <organismsDiffer>false</organismsDiffer>
    <experiments>3</experiments>
</comment>
<comment type="interaction">
    <interactant intactId="EBI-742928">
        <id>Q53H80</id>
    </interactant>
    <interactant intactId="EBI-741237">
        <id>O60504</id>
        <label>SORBS3</label>
    </interactant>
    <organismsDiffer>false</organismsDiffer>
    <experiments>3</experiments>
</comment>
<comment type="interaction">
    <interactant intactId="EBI-742928">
        <id>Q53H80</id>
    </interactant>
    <interactant intactId="EBI-742688">
        <id>Q9NZD8</id>
        <label>SPG21</label>
    </interactant>
    <organismsDiffer>false</organismsDiffer>
    <experiments>12</experiments>
</comment>
<comment type="subcellular location">
    <subcellularLocation>
        <location evidence="3 4">Nucleus</location>
    </subcellularLocation>
    <subcellularLocation>
        <location evidence="1">Cytoplasm</location>
    </subcellularLocation>
    <subcellularLocation>
        <location evidence="1">Membrane</location>
    </subcellularLocation>
    <text evidence="1">Present mainly in the nuclear fraction, and at much lower level in the cytoplasmic and membrane fractions.</text>
</comment>
<comment type="tissue specificity">
    <text evidence="3">Widely expressed with the highest expression in peripheral blood leukocytes.</text>
</comment>
<comment type="PTM">
    <text evidence="5">Polyubiquitinated (PubMed:37409633). Polyubiquitination is dependent of UBR5 that extends pre-ubiquitinated AKIRIN2 (PubMed:37409633).</text>
</comment>
<comment type="miscellaneous">
    <text evidence="8">'Akiraka ni suru' means 'making things clear' in Japanese. The name is given based on the presence of the clear nuclear localization signal.</text>
</comment>
<comment type="similarity">
    <text evidence="7">Belongs to the akirin family.</text>
</comment>
<dbReference type="EMBL" id="AK222701">
    <property type="protein sequence ID" value="BAD96421.1"/>
    <property type="molecule type" value="mRNA"/>
</dbReference>
<dbReference type="EMBL" id="AL133211">
    <property type="status" value="NOT_ANNOTATED_CDS"/>
    <property type="molecule type" value="Genomic_DNA"/>
</dbReference>
<dbReference type="EMBL" id="BC000764">
    <property type="protein sequence ID" value="AAH00764.1"/>
    <property type="molecule type" value="mRNA"/>
</dbReference>
<dbReference type="EMBL" id="BC003042">
    <property type="protein sequence ID" value="AAH03042.1"/>
    <property type="molecule type" value="mRNA"/>
</dbReference>
<dbReference type="EMBL" id="BC005051">
    <property type="protein sequence ID" value="AAH05051.1"/>
    <property type="molecule type" value="mRNA"/>
</dbReference>
<dbReference type="CCDS" id="CCDS5013.1"/>
<dbReference type="RefSeq" id="NP_060534.1">
    <property type="nucleotide sequence ID" value="NM_018064.4"/>
</dbReference>
<dbReference type="PDB" id="7NHT">
    <property type="method" value="EM"/>
    <property type="resolution" value="2.80 A"/>
    <property type="chains" value="c/d=1-203"/>
</dbReference>
<dbReference type="PDBsum" id="7NHT"/>
<dbReference type="EMDB" id="EMD-12341"/>
<dbReference type="SMR" id="Q53H80"/>
<dbReference type="BioGRID" id="120430">
    <property type="interactions" value="78"/>
</dbReference>
<dbReference type="FunCoup" id="Q53H80">
    <property type="interactions" value="3388"/>
</dbReference>
<dbReference type="IntAct" id="Q53H80">
    <property type="interactions" value="36"/>
</dbReference>
<dbReference type="STRING" id="9606.ENSP00000257787"/>
<dbReference type="GlyGen" id="Q53H80">
    <property type="glycosylation" value="1 site, 1 O-linked glycan (1 site)"/>
</dbReference>
<dbReference type="iPTMnet" id="Q53H80"/>
<dbReference type="PhosphoSitePlus" id="Q53H80"/>
<dbReference type="BioMuta" id="AKIRIN2"/>
<dbReference type="DMDM" id="71152385"/>
<dbReference type="jPOST" id="Q53H80"/>
<dbReference type="MassIVE" id="Q53H80"/>
<dbReference type="PaxDb" id="9606-ENSP00000257787"/>
<dbReference type="PeptideAtlas" id="Q53H80"/>
<dbReference type="ProteomicsDB" id="62500"/>
<dbReference type="Pumba" id="Q53H80"/>
<dbReference type="Antibodypedia" id="31831">
    <property type="antibodies" value="179 antibodies from 26 providers"/>
</dbReference>
<dbReference type="DNASU" id="55122"/>
<dbReference type="Ensembl" id="ENST00000257787.6">
    <property type="protein sequence ID" value="ENSP00000257787.5"/>
    <property type="gene ID" value="ENSG00000135334.9"/>
</dbReference>
<dbReference type="GeneID" id="55122"/>
<dbReference type="KEGG" id="hsa:55122"/>
<dbReference type="MANE-Select" id="ENST00000257787.6">
    <property type="protein sequence ID" value="ENSP00000257787.5"/>
    <property type="RefSeq nucleotide sequence ID" value="NM_018064.4"/>
    <property type="RefSeq protein sequence ID" value="NP_060534.1"/>
</dbReference>
<dbReference type="UCSC" id="uc003pmk.4">
    <property type="organism name" value="human"/>
</dbReference>
<dbReference type="AGR" id="HGNC:21407"/>
<dbReference type="CTD" id="55122"/>
<dbReference type="DisGeNET" id="55122"/>
<dbReference type="GeneCards" id="AKIRIN2"/>
<dbReference type="HGNC" id="HGNC:21407">
    <property type="gene designation" value="AKIRIN2"/>
</dbReference>
<dbReference type="HPA" id="ENSG00000135334">
    <property type="expression patterns" value="Low tissue specificity"/>
</dbReference>
<dbReference type="MIM" id="615165">
    <property type="type" value="gene"/>
</dbReference>
<dbReference type="neXtProt" id="NX_Q53H80"/>
<dbReference type="OpenTargets" id="ENSG00000135334"/>
<dbReference type="PharmGKB" id="PA162376195"/>
<dbReference type="VEuPathDB" id="HostDB:ENSG00000135334"/>
<dbReference type="eggNOG" id="KOG4330">
    <property type="taxonomic scope" value="Eukaryota"/>
</dbReference>
<dbReference type="GeneTree" id="ENSGT00940000156096"/>
<dbReference type="HOGENOM" id="CLU_119227_0_0_1"/>
<dbReference type="InParanoid" id="Q53H80"/>
<dbReference type="OMA" id="QADGCCP"/>
<dbReference type="OrthoDB" id="10039914at2759"/>
<dbReference type="PAN-GO" id="Q53H80">
    <property type="GO annotations" value="5 GO annotations based on evolutionary models"/>
</dbReference>
<dbReference type="PhylomeDB" id="Q53H80"/>
<dbReference type="TreeFam" id="TF317123"/>
<dbReference type="PathwayCommons" id="Q53H80"/>
<dbReference type="SignaLink" id="Q53H80"/>
<dbReference type="BioGRID-ORCS" id="55122">
    <property type="hits" value="719 hits in 1159 CRISPR screens"/>
</dbReference>
<dbReference type="CD-CODE" id="B5B9A610">
    <property type="entry name" value="PML body"/>
</dbReference>
<dbReference type="ChiTaRS" id="AKIRIN2">
    <property type="organism name" value="human"/>
</dbReference>
<dbReference type="GeneWiki" id="C6orf166"/>
<dbReference type="GenomeRNAi" id="55122"/>
<dbReference type="Pharos" id="Q53H80">
    <property type="development level" value="Tbio"/>
</dbReference>
<dbReference type="PRO" id="PR:Q53H80"/>
<dbReference type="Proteomes" id="UP000005640">
    <property type="component" value="Chromosome 6"/>
</dbReference>
<dbReference type="RNAct" id="Q53H80">
    <property type="molecule type" value="protein"/>
</dbReference>
<dbReference type="Bgee" id="ENSG00000135334">
    <property type="expression patterns" value="Expressed in oocyte and 186 other cell types or tissues"/>
</dbReference>
<dbReference type="GO" id="GO:0000785">
    <property type="term" value="C:chromatin"/>
    <property type="evidence" value="ECO:0000318"/>
    <property type="project" value="GO_Central"/>
</dbReference>
<dbReference type="GO" id="GO:0005737">
    <property type="term" value="C:cytoplasm"/>
    <property type="evidence" value="ECO:0007669"/>
    <property type="project" value="UniProtKB-SubCell"/>
</dbReference>
<dbReference type="GO" id="GO:0016020">
    <property type="term" value="C:membrane"/>
    <property type="evidence" value="ECO:0007669"/>
    <property type="project" value="UniProtKB-SubCell"/>
</dbReference>
<dbReference type="GO" id="GO:0005654">
    <property type="term" value="C:nucleoplasm"/>
    <property type="evidence" value="ECO:0000314"/>
    <property type="project" value="HPA"/>
</dbReference>
<dbReference type="GO" id="GO:0005634">
    <property type="term" value="C:nucleus"/>
    <property type="evidence" value="ECO:0000314"/>
    <property type="project" value="UniProtKB"/>
</dbReference>
<dbReference type="GO" id="GO:0017053">
    <property type="term" value="C:transcription repressor complex"/>
    <property type="evidence" value="ECO:0000250"/>
    <property type="project" value="UniProtKB"/>
</dbReference>
<dbReference type="GO" id="GO:0019899">
    <property type="term" value="F:enzyme binding"/>
    <property type="evidence" value="ECO:0000353"/>
    <property type="project" value="UniProtKB"/>
</dbReference>
<dbReference type="GO" id="GO:0042802">
    <property type="term" value="F:identical protein binding"/>
    <property type="evidence" value="ECO:0000353"/>
    <property type="project" value="IntAct"/>
</dbReference>
<dbReference type="GO" id="GO:0030674">
    <property type="term" value="F:protein-macromolecule adaptor activity"/>
    <property type="evidence" value="ECO:0000314"/>
    <property type="project" value="UniProtKB"/>
</dbReference>
<dbReference type="GO" id="GO:0003712">
    <property type="term" value="F:transcription coregulator activity"/>
    <property type="evidence" value="ECO:0000318"/>
    <property type="project" value="GO_Central"/>
</dbReference>
<dbReference type="GO" id="GO:0002250">
    <property type="term" value="P:adaptive immune response"/>
    <property type="evidence" value="ECO:0007669"/>
    <property type="project" value="UniProtKB-KW"/>
</dbReference>
<dbReference type="GO" id="GO:0021987">
    <property type="term" value="P:cerebral cortex development"/>
    <property type="evidence" value="ECO:0000250"/>
    <property type="project" value="UniProtKB"/>
</dbReference>
<dbReference type="GO" id="GO:0042742">
    <property type="term" value="P:defense response to bacterium"/>
    <property type="evidence" value="ECO:0000250"/>
    <property type="project" value="UniProtKB"/>
</dbReference>
<dbReference type="GO" id="GO:0009792">
    <property type="term" value="P:embryo development ending in birth or egg hatching"/>
    <property type="evidence" value="ECO:0007669"/>
    <property type="project" value="Ensembl"/>
</dbReference>
<dbReference type="GO" id="GO:0045087">
    <property type="term" value="P:innate immune response"/>
    <property type="evidence" value="ECO:0007669"/>
    <property type="project" value="UniProtKB-KW"/>
</dbReference>
<dbReference type="GO" id="GO:0071630">
    <property type="term" value="P:nuclear protein quality control by the ubiquitin-proteasome system"/>
    <property type="evidence" value="ECO:0000314"/>
    <property type="project" value="UniProtKB"/>
</dbReference>
<dbReference type="GO" id="GO:0002821">
    <property type="term" value="P:positive regulation of adaptive immune response"/>
    <property type="evidence" value="ECO:0000250"/>
    <property type="project" value="UniProtKB"/>
</dbReference>
<dbReference type="GO" id="GO:0050871">
    <property type="term" value="P:positive regulation of B cell activation"/>
    <property type="evidence" value="ECO:0007669"/>
    <property type="project" value="Ensembl"/>
</dbReference>
<dbReference type="GO" id="GO:0045089">
    <property type="term" value="P:positive regulation of innate immune response"/>
    <property type="evidence" value="ECO:0000250"/>
    <property type="project" value="UniProtKB"/>
</dbReference>
<dbReference type="GO" id="GO:0032755">
    <property type="term" value="P:positive regulation of interleukin-6 production"/>
    <property type="evidence" value="ECO:0000250"/>
    <property type="project" value="UniProtKB"/>
</dbReference>
<dbReference type="GO" id="GO:0045944">
    <property type="term" value="P:positive regulation of transcription by RNA polymerase II"/>
    <property type="evidence" value="ECO:0000250"/>
    <property type="project" value="UniProtKB"/>
</dbReference>
<dbReference type="GO" id="GO:0031144">
    <property type="term" value="P:proteasome localization"/>
    <property type="evidence" value="ECO:0000314"/>
    <property type="project" value="UniProtKB"/>
</dbReference>
<dbReference type="GO" id="GO:0006606">
    <property type="term" value="P:protein import into nucleus"/>
    <property type="evidence" value="ECO:0000314"/>
    <property type="project" value="UniProtKB"/>
</dbReference>
<dbReference type="GO" id="GO:0051147">
    <property type="term" value="P:regulation of muscle cell differentiation"/>
    <property type="evidence" value="ECO:0007669"/>
    <property type="project" value="Ensembl"/>
</dbReference>
<dbReference type="GO" id="GO:0032496">
    <property type="term" value="P:response to lipopolysaccharide"/>
    <property type="evidence" value="ECO:0007669"/>
    <property type="project" value="Ensembl"/>
</dbReference>
<dbReference type="CDD" id="cd22244">
    <property type="entry name" value="akirin-2"/>
    <property type="match status" value="1"/>
</dbReference>
<dbReference type="InterPro" id="IPR024132">
    <property type="entry name" value="Akirin"/>
</dbReference>
<dbReference type="PANTHER" id="PTHR13293:SF8">
    <property type="entry name" value="AKIRIN-2"/>
    <property type="match status" value="1"/>
</dbReference>
<dbReference type="PANTHER" id="PTHR13293">
    <property type="entry name" value="AKIRIN-RELATED"/>
    <property type="match status" value="1"/>
</dbReference>
<organism>
    <name type="scientific">Homo sapiens</name>
    <name type="common">Human</name>
    <dbReference type="NCBI Taxonomy" id="9606"/>
    <lineage>
        <taxon>Eukaryota</taxon>
        <taxon>Metazoa</taxon>
        <taxon>Chordata</taxon>
        <taxon>Craniata</taxon>
        <taxon>Vertebrata</taxon>
        <taxon>Euteleostomi</taxon>
        <taxon>Mammalia</taxon>
        <taxon>Eutheria</taxon>
        <taxon>Euarchontoglires</taxon>
        <taxon>Primates</taxon>
        <taxon>Haplorrhini</taxon>
        <taxon>Catarrhini</taxon>
        <taxon>Hominidae</taxon>
        <taxon>Homo</taxon>
    </lineage>
</organism>
<accession>Q53H80</accession>
<accession>Q9BQB1</accession>
<gene>
    <name evidence="6 10" type="primary">AKIRIN2</name>
    <name evidence="10" type="synonym">C6orf166</name>
</gene>
<name>AKIR2_HUMAN</name>
<reference key="1">
    <citation type="submission" date="2005-04" db="EMBL/GenBank/DDBJ databases">
        <authorList>
            <person name="Suzuki Y."/>
            <person name="Sugano S."/>
            <person name="Totoki Y."/>
            <person name="Toyoda A."/>
            <person name="Takeda T."/>
            <person name="Sakaki Y."/>
            <person name="Tanaka A."/>
            <person name="Yokoyama S."/>
        </authorList>
    </citation>
    <scope>NUCLEOTIDE SEQUENCE [LARGE SCALE MRNA]</scope>
    <source>
        <tissue>Brain</tissue>
    </source>
</reference>
<reference key="2">
    <citation type="journal article" date="2003" name="Nature">
        <title>The DNA sequence and analysis of human chromosome 6.</title>
        <authorList>
            <person name="Mungall A.J."/>
            <person name="Palmer S.A."/>
            <person name="Sims S.K."/>
            <person name="Edwards C.A."/>
            <person name="Ashurst J.L."/>
            <person name="Wilming L."/>
            <person name="Jones M.C."/>
            <person name="Horton R."/>
            <person name="Hunt S.E."/>
            <person name="Scott C.E."/>
            <person name="Gilbert J.G.R."/>
            <person name="Clamp M.E."/>
            <person name="Bethel G."/>
            <person name="Milne S."/>
            <person name="Ainscough R."/>
            <person name="Almeida J.P."/>
            <person name="Ambrose K.D."/>
            <person name="Andrews T.D."/>
            <person name="Ashwell R.I.S."/>
            <person name="Babbage A.K."/>
            <person name="Bagguley C.L."/>
            <person name="Bailey J."/>
            <person name="Banerjee R."/>
            <person name="Barker D.J."/>
            <person name="Barlow K.F."/>
            <person name="Bates K."/>
            <person name="Beare D.M."/>
            <person name="Beasley H."/>
            <person name="Beasley O."/>
            <person name="Bird C.P."/>
            <person name="Blakey S.E."/>
            <person name="Bray-Allen S."/>
            <person name="Brook J."/>
            <person name="Brown A.J."/>
            <person name="Brown J.Y."/>
            <person name="Burford D.C."/>
            <person name="Burrill W."/>
            <person name="Burton J."/>
            <person name="Carder C."/>
            <person name="Carter N.P."/>
            <person name="Chapman J.C."/>
            <person name="Clark S.Y."/>
            <person name="Clark G."/>
            <person name="Clee C.M."/>
            <person name="Clegg S."/>
            <person name="Cobley V."/>
            <person name="Collier R.E."/>
            <person name="Collins J.E."/>
            <person name="Colman L.K."/>
            <person name="Corby N.R."/>
            <person name="Coville G.J."/>
            <person name="Culley K.M."/>
            <person name="Dhami P."/>
            <person name="Davies J."/>
            <person name="Dunn M."/>
            <person name="Earthrowl M.E."/>
            <person name="Ellington A.E."/>
            <person name="Evans K.A."/>
            <person name="Faulkner L."/>
            <person name="Francis M.D."/>
            <person name="Frankish A."/>
            <person name="Frankland J."/>
            <person name="French L."/>
            <person name="Garner P."/>
            <person name="Garnett J."/>
            <person name="Ghori M.J."/>
            <person name="Gilby L.M."/>
            <person name="Gillson C.J."/>
            <person name="Glithero R.J."/>
            <person name="Grafham D.V."/>
            <person name="Grant M."/>
            <person name="Gribble S."/>
            <person name="Griffiths C."/>
            <person name="Griffiths M.N.D."/>
            <person name="Hall R."/>
            <person name="Halls K.S."/>
            <person name="Hammond S."/>
            <person name="Harley J.L."/>
            <person name="Hart E.A."/>
            <person name="Heath P.D."/>
            <person name="Heathcott R."/>
            <person name="Holmes S.J."/>
            <person name="Howden P.J."/>
            <person name="Howe K.L."/>
            <person name="Howell G.R."/>
            <person name="Huckle E."/>
            <person name="Humphray S.J."/>
            <person name="Humphries M.D."/>
            <person name="Hunt A.R."/>
            <person name="Johnson C.M."/>
            <person name="Joy A.A."/>
            <person name="Kay M."/>
            <person name="Keenan S.J."/>
            <person name="Kimberley A.M."/>
            <person name="King A."/>
            <person name="Laird G.K."/>
            <person name="Langford C."/>
            <person name="Lawlor S."/>
            <person name="Leongamornlert D.A."/>
            <person name="Leversha M."/>
            <person name="Lloyd C.R."/>
            <person name="Lloyd D.M."/>
            <person name="Loveland J.E."/>
            <person name="Lovell J."/>
            <person name="Martin S."/>
            <person name="Mashreghi-Mohammadi M."/>
            <person name="Maslen G.L."/>
            <person name="Matthews L."/>
            <person name="McCann O.T."/>
            <person name="McLaren S.J."/>
            <person name="McLay K."/>
            <person name="McMurray A."/>
            <person name="Moore M.J.F."/>
            <person name="Mullikin J.C."/>
            <person name="Niblett D."/>
            <person name="Nickerson T."/>
            <person name="Novik K.L."/>
            <person name="Oliver K."/>
            <person name="Overton-Larty E.K."/>
            <person name="Parker A."/>
            <person name="Patel R."/>
            <person name="Pearce A.V."/>
            <person name="Peck A.I."/>
            <person name="Phillimore B.J.C.T."/>
            <person name="Phillips S."/>
            <person name="Plumb R.W."/>
            <person name="Porter K.M."/>
            <person name="Ramsey Y."/>
            <person name="Ranby S.A."/>
            <person name="Rice C.M."/>
            <person name="Ross M.T."/>
            <person name="Searle S.M."/>
            <person name="Sehra H.K."/>
            <person name="Sheridan E."/>
            <person name="Skuce C.D."/>
            <person name="Smith S."/>
            <person name="Smith M."/>
            <person name="Spraggon L."/>
            <person name="Squares S.L."/>
            <person name="Steward C.A."/>
            <person name="Sycamore N."/>
            <person name="Tamlyn-Hall G."/>
            <person name="Tester J."/>
            <person name="Theaker A.J."/>
            <person name="Thomas D.W."/>
            <person name="Thorpe A."/>
            <person name="Tracey A."/>
            <person name="Tromans A."/>
            <person name="Tubby B."/>
            <person name="Wall M."/>
            <person name="Wallis J.M."/>
            <person name="West A.P."/>
            <person name="White S.S."/>
            <person name="Whitehead S.L."/>
            <person name="Whittaker H."/>
            <person name="Wild A."/>
            <person name="Willey D.J."/>
            <person name="Wilmer T.E."/>
            <person name="Wood J.M."/>
            <person name="Wray P.W."/>
            <person name="Wyatt J.C."/>
            <person name="Young L."/>
            <person name="Younger R.M."/>
            <person name="Bentley D.R."/>
            <person name="Coulson A."/>
            <person name="Durbin R.M."/>
            <person name="Hubbard T."/>
            <person name="Sulston J.E."/>
            <person name="Dunham I."/>
            <person name="Rogers J."/>
            <person name="Beck S."/>
        </authorList>
    </citation>
    <scope>NUCLEOTIDE SEQUENCE [LARGE SCALE GENOMIC DNA]</scope>
</reference>
<reference key="3">
    <citation type="journal article" date="2004" name="Genome Res.">
        <title>The status, quality, and expansion of the NIH full-length cDNA project: the Mammalian Gene Collection (MGC).</title>
        <authorList>
            <consortium name="The MGC Project Team"/>
        </authorList>
    </citation>
    <scope>NUCLEOTIDE SEQUENCE [LARGE SCALE MRNA]</scope>
    <source>
        <tissue>Lung carcinoma</tissue>
    </source>
</reference>
<reference key="4">
    <citation type="journal article" date="2006" name="Cell">
        <title>Global, in vivo, and site-specific phosphorylation dynamics in signaling networks.</title>
        <authorList>
            <person name="Olsen J.V."/>
            <person name="Blagoev B."/>
            <person name="Gnad F."/>
            <person name="Macek B."/>
            <person name="Kumar C."/>
            <person name="Mortensen P."/>
            <person name="Mann M."/>
        </authorList>
    </citation>
    <scope>PHOSPHORYLATION [LARGE SCALE ANALYSIS] AT SER-21</scope>
    <scope>IDENTIFICATION BY MASS SPECTROMETRY [LARGE SCALE ANALYSIS]</scope>
    <source>
        <tissue>Cervix carcinoma</tissue>
    </source>
</reference>
<reference key="5">
    <citation type="journal article" date="2008" name="Nat. Immunol.">
        <title>Akirins are highly conserved nuclear proteins required for NF-kappaB-dependent gene expression in Drosophila and mice.</title>
        <authorList>
            <person name="Goto A."/>
            <person name="Matsushita K."/>
            <person name="Gesellchen V."/>
            <person name="El Chamy L."/>
            <person name="Kuttenkeuler D."/>
            <person name="Takeuchi O."/>
            <person name="Hoffmann J.A."/>
            <person name="Akira S."/>
            <person name="Boutros M."/>
            <person name="Reichhart J.-M."/>
        </authorList>
    </citation>
    <scope>SUBCELLULAR LOCATION</scope>
    <scope>TISSUE SPECIFICITY</scope>
</reference>
<reference key="6">
    <citation type="journal article" date="2008" name="Nat. Immunol.">
        <authorList>
            <person name="Goto A."/>
            <person name="Matsushita K."/>
            <person name="Gesellchen V."/>
            <person name="El Chamy L."/>
            <person name="Kuttenkeuler D."/>
            <person name="Takeuchi O."/>
            <person name="Hoffmann J.A."/>
            <person name="Akira S."/>
            <person name="Boutros M."/>
            <person name="Reichhart J.-M."/>
        </authorList>
    </citation>
    <scope>ERRATUM OF PUBMED:18066067</scope>
</reference>
<reference key="7">
    <citation type="journal article" date="2008" name="Proc. Natl. Acad. Sci. U.S.A.">
        <title>A quantitative atlas of mitotic phosphorylation.</title>
        <authorList>
            <person name="Dephoure N."/>
            <person name="Zhou C."/>
            <person name="Villen J."/>
            <person name="Beausoleil S.A."/>
            <person name="Bakalarski C.E."/>
            <person name="Elledge S.J."/>
            <person name="Gygi S.P."/>
        </authorList>
    </citation>
    <scope>PHOSPHORYLATION [LARGE SCALE ANALYSIS] AT SER-18 AND SER-21</scope>
    <scope>IDENTIFICATION BY MASS SPECTROMETRY [LARGE SCALE ANALYSIS]</scope>
    <source>
        <tissue>Cervix carcinoma</tissue>
    </source>
</reference>
<reference key="8">
    <citation type="journal article" date="2009" name="Sci. Signal.">
        <title>Quantitative phosphoproteomic analysis of T cell receptor signaling reveals system-wide modulation of protein-protein interactions.</title>
        <authorList>
            <person name="Mayya V."/>
            <person name="Lundgren D.H."/>
            <person name="Hwang S.-I."/>
            <person name="Rezaul K."/>
            <person name="Wu L."/>
            <person name="Eng J.K."/>
            <person name="Rodionov V."/>
            <person name="Han D.K."/>
        </authorList>
    </citation>
    <scope>PHOSPHORYLATION [LARGE SCALE ANALYSIS] AT SER-21</scope>
    <scope>IDENTIFICATION BY MASS SPECTROMETRY [LARGE SCALE ANALYSIS]</scope>
    <source>
        <tissue>Leukemic T-cell</tissue>
    </source>
</reference>
<reference key="9">
    <citation type="journal article" date="2010" name="Sci. Signal.">
        <title>Quantitative phosphoproteomics reveals widespread full phosphorylation site occupancy during mitosis.</title>
        <authorList>
            <person name="Olsen J.V."/>
            <person name="Vermeulen M."/>
            <person name="Santamaria A."/>
            <person name="Kumar C."/>
            <person name="Miller M.L."/>
            <person name="Jensen L.J."/>
            <person name="Gnad F."/>
            <person name="Cox J."/>
            <person name="Jensen T.S."/>
            <person name="Nigg E.A."/>
            <person name="Brunak S."/>
            <person name="Mann M."/>
        </authorList>
    </citation>
    <scope>PHOSPHORYLATION [LARGE SCALE ANALYSIS] AT SER-18 AND SER-21</scope>
    <scope>IDENTIFICATION BY MASS SPECTROMETRY [LARGE SCALE ANALYSIS]</scope>
    <source>
        <tissue>Cervix carcinoma</tissue>
    </source>
</reference>
<reference key="10">
    <citation type="journal article" date="2013" name="J. Proteome Res.">
        <title>Toward a comprehensive characterization of a human cancer cell phosphoproteome.</title>
        <authorList>
            <person name="Zhou H."/>
            <person name="Di Palma S."/>
            <person name="Preisinger C."/>
            <person name="Peng M."/>
            <person name="Polat A.N."/>
            <person name="Heck A.J."/>
            <person name="Mohammed S."/>
        </authorList>
    </citation>
    <scope>PHOSPHORYLATION [LARGE SCALE ANALYSIS] AT SER-18 AND SER-21</scope>
    <scope>IDENTIFICATION BY MASS SPECTROMETRY [LARGE SCALE ANALYSIS]</scope>
    <source>
        <tissue>Cervix carcinoma</tissue>
        <tissue>Erythroleukemia</tissue>
    </source>
</reference>
<reference key="11">
    <citation type="journal article" date="2023" name="EMBO J.">
        <title>Cryo-EM structure of the chain-elongating E3 ubiquitin ligase UBR5.</title>
        <authorList>
            <person name="Hodakova Z."/>
            <person name="Grishkovskaya I."/>
            <person name="Brunner H.L."/>
            <person name="Bolhuis D.L."/>
            <person name="Belacic K."/>
            <person name="Schleiffer A."/>
            <person name="Kotisch H."/>
            <person name="Brown N.G."/>
            <person name="Haselbach D."/>
        </authorList>
    </citation>
    <scope>UBIQUITINATION</scope>
</reference>
<reference key="12">
    <citation type="journal article" date="2021" name="Nature">
        <title>AKIRIN2 controls the nuclear import of proteasomes in vertebrates.</title>
        <authorList>
            <person name="de Almeida M."/>
            <person name="Hinterndorfer M."/>
            <person name="Brunner H."/>
            <person name="Grishkovskaya I."/>
            <person name="Singh K."/>
            <person name="Schleiffer A."/>
            <person name="Jude J."/>
            <person name="Deswal S."/>
            <person name="Kalis R."/>
            <person name="Vunjak M."/>
            <person name="Lendl T."/>
            <person name="Imre R."/>
            <person name="Roitinger E."/>
            <person name="Neumann T."/>
            <person name="Kandolf S."/>
            <person name="Schutzbier M."/>
            <person name="Mechtler K."/>
            <person name="Versteeg G.A."/>
            <person name="Haselbach D."/>
            <person name="Zuber J."/>
        </authorList>
    </citation>
    <scope>STRUCTURE BY ELECTRON MICROSCOPY (2.80 ANGSTROMS) IN COMPLEX WITH 20S PROTEASOME</scope>
    <scope>FUNCTION</scope>
    <scope>SUBUNIT</scope>
    <scope>SUBCELLULAR LOCATION</scope>
    <scope>INTERACTION WITH IPO9</scope>
    <scope>MUTAGENESIS OF 201-TYR--SER-203</scope>
</reference>
<protein>
    <recommendedName>
        <fullName evidence="7">Akirin-2</fullName>
    </recommendedName>
</protein>
<sequence length="203" mass="22496">MACGATLKRTLDFDPLLSPASPKRRRCAPLSAPTSAAASPLSAAAATAASFSAAAASPQKYLRMEPSPFGDVSSRLTTEQILYNIKQEYKRMQKRRHLETSFQQTDPCCTSDAQPHAFLLSGPASPGTSSAASSPLKKEQPLFTLRQVGMICERLLKEREEKVREEYEEILNTKLAEQYDAFVKFTHDQIMRRYGEQPASYVS</sequence>
<keyword id="KW-0002">3D-structure</keyword>
<keyword id="KW-1064">Adaptive immunity</keyword>
<keyword id="KW-0963">Cytoplasm</keyword>
<keyword id="KW-0217">Developmental protein</keyword>
<keyword id="KW-0391">Immunity</keyword>
<keyword id="KW-0399">Innate immunity</keyword>
<keyword id="KW-0472">Membrane</keyword>
<keyword id="KW-0539">Nucleus</keyword>
<keyword id="KW-0597">Phosphoprotein</keyword>
<keyword id="KW-0653">Protein transport</keyword>
<keyword id="KW-1267">Proteomics identification</keyword>
<keyword id="KW-1185">Reference proteome</keyword>
<keyword id="KW-0678">Repressor</keyword>
<keyword id="KW-0804">Transcription</keyword>
<keyword id="KW-0805">Transcription regulation</keyword>
<keyword id="KW-0813">Transport</keyword>
<keyword id="KW-0832">Ubl conjugation</keyword>
<proteinExistence type="evidence at protein level"/>
<evidence type="ECO:0000250" key="1">
    <source>
        <dbReference type="UniProtKB" id="B1AXD8"/>
    </source>
</evidence>
<evidence type="ECO:0000250" key="2">
    <source>
        <dbReference type="UniProtKB" id="Q25C79"/>
    </source>
</evidence>
<evidence type="ECO:0000269" key="3">
    <source>
    </source>
</evidence>
<evidence type="ECO:0000269" key="4">
    <source>
    </source>
</evidence>
<evidence type="ECO:0000269" key="5">
    <source>
    </source>
</evidence>
<evidence type="ECO:0000303" key="6">
    <source>
    </source>
</evidence>
<evidence type="ECO:0000305" key="7"/>
<evidence type="ECO:0000305" key="8">
    <source>
    </source>
</evidence>
<evidence type="ECO:0000305" key="9">
    <source>
    </source>
</evidence>
<evidence type="ECO:0000312" key="10">
    <source>
        <dbReference type="HGNC" id="HGNC:21407"/>
    </source>
</evidence>
<evidence type="ECO:0007744" key="11">
    <source>
    </source>
</evidence>
<evidence type="ECO:0007744" key="12">
    <source>
    </source>
</evidence>
<evidence type="ECO:0007744" key="13">
    <source>
    </source>
</evidence>
<evidence type="ECO:0007744" key="14">
    <source>
    </source>
</evidence>
<evidence type="ECO:0007744" key="15">
    <source>
    </source>
</evidence>
<evidence type="ECO:0007829" key="16">
    <source>
        <dbReference type="PDB" id="7NHT"/>
    </source>
</evidence>
<feature type="chain" id="PRO_0000089555" description="Akirin-2">
    <location>
        <begin position="1"/>
        <end position="203"/>
    </location>
</feature>
<feature type="short sequence motif" description="Nuclear localization signal" evidence="8">
    <location>
        <begin position="22"/>
        <end position="27"/>
    </location>
</feature>
<feature type="short sequence motif" description="SYVS motif" evidence="9">
    <location>
        <begin position="200"/>
        <end position="203"/>
    </location>
</feature>
<feature type="modified residue" description="Phosphoserine" evidence="12 14 15">
    <location>
        <position position="18"/>
    </location>
</feature>
<feature type="modified residue" description="Phosphoserine" evidence="11 12 13 14 15">
    <location>
        <position position="21"/>
    </location>
</feature>
<feature type="modified residue" description="Phosphoserine" evidence="1">
    <location>
        <position position="57"/>
    </location>
</feature>
<feature type="mutagenesis site" description="Abolished association with the 20S and 26S proteasomes." evidence="4">
    <location>
        <begin position="201"/>
        <end position="203"/>
    </location>
</feature>
<feature type="sequence conflict" description="In Ref. 1; BAD96421." evidence="7" ref="1">
    <original>L</original>
    <variation>S</variation>
    <location>
        <position position="171"/>
    </location>
</feature>
<feature type="helix" evidence="16">
    <location>
        <begin position="157"/>
        <end position="189"/>
    </location>
</feature>